<accession>A1TJ31</accession>
<dbReference type="EC" id="2.8.1.8" evidence="1"/>
<dbReference type="EMBL" id="CP000512">
    <property type="protein sequence ID" value="ABM30969.1"/>
    <property type="molecule type" value="Genomic_DNA"/>
</dbReference>
<dbReference type="RefSeq" id="WP_011793546.1">
    <property type="nucleotide sequence ID" value="NC_008752.1"/>
</dbReference>
<dbReference type="SMR" id="A1TJ31"/>
<dbReference type="STRING" id="397945.Aave_0362"/>
<dbReference type="KEGG" id="aav:Aave_0362"/>
<dbReference type="eggNOG" id="COG0320">
    <property type="taxonomic scope" value="Bacteria"/>
</dbReference>
<dbReference type="HOGENOM" id="CLU_033144_2_1_4"/>
<dbReference type="OrthoDB" id="9787898at2"/>
<dbReference type="UniPathway" id="UPA00538">
    <property type="reaction ID" value="UER00593"/>
</dbReference>
<dbReference type="Proteomes" id="UP000002596">
    <property type="component" value="Chromosome"/>
</dbReference>
<dbReference type="GO" id="GO:0005737">
    <property type="term" value="C:cytoplasm"/>
    <property type="evidence" value="ECO:0007669"/>
    <property type="project" value="UniProtKB-SubCell"/>
</dbReference>
<dbReference type="GO" id="GO:0051539">
    <property type="term" value="F:4 iron, 4 sulfur cluster binding"/>
    <property type="evidence" value="ECO:0007669"/>
    <property type="project" value="UniProtKB-UniRule"/>
</dbReference>
<dbReference type="GO" id="GO:0016992">
    <property type="term" value="F:lipoate synthase activity"/>
    <property type="evidence" value="ECO:0007669"/>
    <property type="project" value="UniProtKB-UniRule"/>
</dbReference>
<dbReference type="GO" id="GO:0046872">
    <property type="term" value="F:metal ion binding"/>
    <property type="evidence" value="ECO:0007669"/>
    <property type="project" value="UniProtKB-KW"/>
</dbReference>
<dbReference type="CDD" id="cd01335">
    <property type="entry name" value="Radical_SAM"/>
    <property type="match status" value="1"/>
</dbReference>
<dbReference type="FunFam" id="3.20.20.70:FF:000040">
    <property type="entry name" value="Lipoyl synthase"/>
    <property type="match status" value="1"/>
</dbReference>
<dbReference type="Gene3D" id="3.20.20.70">
    <property type="entry name" value="Aldolase class I"/>
    <property type="match status" value="1"/>
</dbReference>
<dbReference type="HAMAP" id="MF_00206">
    <property type="entry name" value="Lipoyl_synth"/>
    <property type="match status" value="1"/>
</dbReference>
<dbReference type="InterPro" id="IPR013785">
    <property type="entry name" value="Aldolase_TIM"/>
</dbReference>
<dbReference type="InterPro" id="IPR006638">
    <property type="entry name" value="Elp3/MiaA/NifB-like_rSAM"/>
</dbReference>
<dbReference type="InterPro" id="IPR031691">
    <property type="entry name" value="LIAS_N"/>
</dbReference>
<dbReference type="InterPro" id="IPR003698">
    <property type="entry name" value="Lipoyl_synth"/>
</dbReference>
<dbReference type="InterPro" id="IPR007197">
    <property type="entry name" value="rSAM"/>
</dbReference>
<dbReference type="NCBIfam" id="TIGR00510">
    <property type="entry name" value="lipA"/>
    <property type="match status" value="1"/>
</dbReference>
<dbReference type="NCBIfam" id="NF004019">
    <property type="entry name" value="PRK05481.1"/>
    <property type="match status" value="1"/>
</dbReference>
<dbReference type="NCBIfam" id="NF009544">
    <property type="entry name" value="PRK12928.1"/>
    <property type="match status" value="1"/>
</dbReference>
<dbReference type="PANTHER" id="PTHR10949">
    <property type="entry name" value="LIPOYL SYNTHASE"/>
    <property type="match status" value="1"/>
</dbReference>
<dbReference type="PANTHER" id="PTHR10949:SF0">
    <property type="entry name" value="LIPOYL SYNTHASE, MITOCHONDRIAL"/>
    <property type="match status" value="1"/>
</dbReference>
<dbReference type="Pfam" id="PF16881">
    <property type="entry name" value="LIAS_N"/>
    <property type="match status" value="1"/>
</dbReference>
<dbReference type="Pfam" id="PF04055">
    <property type="entry name" value="Radical_SAM"/>
    <property type="match status" value="1"/>
</dbReference>
<dbReference type="PIRSF" id="PIRSF005963">
    <property type="entry name" value="Lipoyl_synth"/>
    <property type="match status" value="1"/>
</dbReference>
<dbReference type="SFLD" id="SFLDF00271">
    <property type="entry name" value="lipoyl_synthase"/>
    <property type="match status" value="1"/>
</dbReference>
<dbReference type="SFLD" id="SFLDG01058">
    <property type="entry name" value="lipoyl_synthase_like"/>
    <property type="match status" value="1"/>
</dbReference>
<dbReference type="SMART" id="SM00729">
    <property type="entry name" value="Elp3"/>
    <property type="match status" value="1"/>
</dbReference>
<dbReference type="SUPFAM" id="SSF102114">
    <property type="entry name" value="Radical SAM enzymes"/>
    <property type="match status" value="1"/>
</dbReference>
<dbReference type="PROSITE" id="PS51918">
    <property type="entry name" value="RADICAL_SAM"/>
    <property type="match status" value="1"/>
</dbReference>
<proteinExistence type="inferred from homology"/>
<keyword id="KW-0004">4Fe-4S</keyword>
<keyword id="KW-0963">Cytoplasm</keyword>
<keyword id="KW-0408">Iron</keyword>
<keyword id="KW-0411">Iron-sulfur</keyword>
<keyword id="KW-0479">Metal-binding</keyword>
<keyword id="KW-0949">S-adenosyl-L-methionine</keyword>
<keyword id="KW-0808">Transferase</keyword>
<feature type="chain" id="PRO_0000325222" description="Lipoyl synthase">
    <location>
        <begin position="1"/>
        <end position="332"/>
    </location>
</feature>
<feature type="domain" description="Radical SAM core" evidence="2">
    <location>
        <begin position="85"/>
        <end position="303"/>
    </location>
</feature>
<feature type="binding site" evidence="1">
    <location>
        <position position="74"/>
    </location>
    <ligand>
        <name>[4Fe-4S] cluster</name>
        <dbReference type="ChEBI" id="CHEBI:49883"/>
        <label>1</label>
    </ligand>
</feature>
<feature type="binding site" evidence="1">
    <location>
        <position position="79"/>
    </location>
    <ligand>
        <name>[4Fe-4S] cluster</name>
        <dbReference type="ChEBI" id="CHEBI:49883"/>
        <label>1</label>
    </ligand>
</feature>
<feature type="binding site" evidence="1">
    <location>
        <position position="85"/>
    </location>
    <ligand>
        <name>[4Fe-4S] cluster</name>
        <dbReference type="ChEBI" id="CHEBI:49883"/>
        <label>1</label>
    </ligand>
</feature>
<feature type="binding site" evidence="1">
    <location>
        <position position="100"/>
    </location>
    <ligand>
        <name>[4Fe-4S] cluster</name>
        <dbReference type="ChEBI" id="CHEBI:49883"/>
        <label>2</label>
        <note>4Fe-4S-S-AdoMet</note>
    </ligand>
</feature>
<feature type="binding site" evidence="1">
    <location>
        <position position="104"/>
    </location>
    <ligand>
        <name>[4Fe-4S] cluster</name>
        <dbReference type="ChEBI" id="CHEBI:49883"/>
        <label>2</label>
        <note>4Fe-4S-S-AdoMet</note>
    </ligand>
</feature>
<feature type="binding site" evidence="1">
    <location>
        <position position="107"/>
    </location>
    <ligand>
        <name>[4Fe-4S] cluster</name>
        <dbReference type="ChEBI" id="CHEBI:49883"/>
        <label>2</label>
        <note>4Fe-4S-S-AdoMet</note>
    </ligand>
</feature>
<feature type="binding site" evidence="1">
    <location>
        <position position="314"/>
    </location>
    <ligand>
        <name>[4Fe-4S] cluster</name>
        <dbReference type="ChEBI" id="CHEBI:49883"/>
        <label>1</label>
    </ligand>
</feature>
<comment type="function">
    <text evidence="1">Catalyzes the radical-mediated insertion of two sulfur atoms into the C-6 and C-8 positions of the octanoyl moiety bound to the lipoyl domains of lipoate-dependent enzymes, thereby converting the octanoylated domains into lipoylated derivatives.</text>
</comment>
<comment type="catalytic activity">
    <reaction evidence="1">
        <text>[[Fe-S] cluster scaffold protein carrying a second [4Fe-4S](2+) cluster] + N(6)-octanoyl-L-lysyl-[protein] + 2 oxidized [2Fe-2S]-[ferredoxin] + 2 S-adenosyl-L-methionine + 4 H(+) = [[Fe-S] cluster scaffold protein] + N(6)-[(R)-dihydrolipoyl]-L-lysyl-[protein] + 4 Fe(3+) + 2 hydrogen sulfide + 2 5'-deoxyadenosine + 2 L-methionine + 2 reduced [2Fe-2S]-[ferredoxin]</text>
        <dbReference type="Rhea" id="RHEA:16585"/>
        <dbReference type="Rhea" id="RHEA-COMP:9928"/>
        <dbReference type="Rhea" id="RHEA-COMP:10000"/>
        <dbReference type="Rhea" id="RHEA-COMP:10001"/>
        <dbReference type="Rhea" id="RHEA-COMP:10475"/>
        <dbReference type="Rhea" id="RHEA-COMP:14568"/>
        <dbReference type="Rhea" id="RHEA-COMP:14569"/>
        <dbReference type="ChEBI" id="CHEBI:15378"/>
        <dbReference type="ChEBI" id="CHEBI:17319"/>
        <dbReference type="ChEBI" id="CHEBI:29034"/>
        <dbReference type="ChEBI" id="CHEBI:29919"/>
        <dbReference type="ChEBI" id="CHEBI:33722"/>
        <dbReference type="ChEBI" id="CHEBI:33737"/>
        <dbReference type="ChEBI" id="CHEBI:33738"/>
        <dbReference type="ChEBI" id="CHEBI:57844"/>
        <dbReference type="ChEBI" id="CHEBI:59789"/>
        <dbReference type="ChEBI" id="CHEBI:78809"/>
        <dbReference type="ChEBI" id="CHEBI:83100"/>
        <dbReference type="EC" id="2.8.1.8"/>
    </reaction>
</comment>
<comment type="cofactor">
    <cofactor evidence="1">
        <name>[4Fe-4S] cluster</name>
        <dbReference type="ChEBI" id="CHEBI:49883"/>
    </cofactor>
    <text evidence="1">Binds 2 [4Fe-4S] clusters per subunit. One cluster is coordinated with 3 cysteines and an exchangeable S-adenosyl-L-methionine.</text>
</comment>
<comment type="pathway">
    <text evidence="1">Protein modification; protein lipoylation via endogenous pathway; protein N(6)-(lipoyl)lysine from octanoyl-[acyl-carrier-protein]: step 2/2.</text>
</comment>
<comment type="subcellular location">
    <subcellularLocation>
        <location evidence="1">Cytoplasm</location>
    </subcellularLocation>
</comment>
<comment type="similarity">
    <text evidence="1">Belongs to the radical SAM superfamily. Lipoyl synthase family.</text>
</comment>
<evidence type="ECO:0000255" key="1">
    <source>
        <dbReference type="HAMAP-Rule" id="MF_00206"/>
    </source>
</evidence>
<evidence type="ECO:0000255" key="2">
    <source>
        <dbReference type="PROSITE-ProRule" id="PRU01266"/>
    </source>
</evidence>
<protein>
    <recommendedName>
        <fullName evidence="1">Lipoyl synthase</fullName>
        <ecNumber evidence="1">2.8.1.8</ecNumber>
    </recommendedName>
    <alternativeName>
        <fullName evidence="1">Lip-syn</fullName>
        <shortName evidence="1">LS</shortName>
    </alternativeName>
    <alternativeName>
        <fullName evidence="1">Lipoate synthase</fullName>
    </alternativeName>
    <alternativeName>
        <fullName evidence="1">Lipoic acid synthase</fullName>
    </alternativeName>
    <alternativeName>
        <fullName evidence="1">Sulfur insertion protein LipA</fullName>
    </alternativeName>
</protein>
<sequence length="332" mass="36947">MSTPEVVREAQSTVAYNPLAKQKAAAKLSRIPIKVEQGEVLKKPEWIRVKAGSPTTRFYEIKEILREHKLHTVCEEASCPNIGECFGKGTATFMIMGDKCTRRCPFCDVGHGRPDPLDKDEPLNLARTIAALKLKYVVITSVDRDDLRDGGSGHFVECIQNIRALSPATQIEILVPDFRGRDDRALEILKAAPPDVMNHNLETAPRLYKEARPGSDYQFSLNLLKKFKALHPGVPTKSGIMVGLGETDEEILQVMRDMRAHDIDMLTIGQYLAPSNSHLPVRRYVHPDTFKMYEEEAYKMGFTHAAVGAMVRSSYHADQQAHAAGLQAGPQG</sequence>
<name>LIPA_PARC0</name>
<reference key="1">
    <citation type="submission" date="2006-12" db="EMBL/GenBank/DDBJ databases">
        <title>Complete sequence of Acidovorax avenae subsp. citrulli AAC00-1.</title>
        <authorList>
            <person name="Copeland A."/>
            <person name="Lucas S."/>
            <person name="Lapidus A."/>
            <person name="Barry K."/>
            <person name="Detter J.C."/>
            <person name="Glavina del Rio T."/>
            <person name="Dalin E."/>
            <person name="Tice H."/>
            <person name="Pitluck S."/>
            <person name="Kiss H."/>
            <person name="Brettin T."/>
            <person name="Bruce D."/>
            <person name="Han C."/>
            <person name="Tapia R."/>
            <person name="Gilna P."/>
            <person name="Schmutz J."/>
            <person name="Larimer F."/>
            <person name="Land M."/>
            <person name="Hauser L."/>
            <person name="Kyrpides N."/>
            <person name="Kim E."/>
            <person name="Stahl D."/>
            <person name="Richardson P."/>
        </authorList>
    </citation>
    <scope>NUCLEOTIDE SEQUENCE [LARGE SCALE GENOMIC DNA]</scope>
    <source>
        <strain>AAC00-1</strain>
    </source>
</reference>
<organism>
    <name type="scientific">Paracidovorax citrulli (strain AAC00-1)</name>
    <name type="common">Acidovorax citrulli</name>
    <dbReference type="NCBI Taxonomy" id="397945"/>
    <lineage>
        <taxon>Bacteria</taxon>
        <taxon>Pseudomonadati</taxon>
        <taxon>Pseudomonadota</taxon>
        <taxon>Betaproteobacteria</taxon>
        <taxon>Burkholderiales</taxon>
        <taxon>Comamonadaceae</taxon>
        <taxon>Paracidovorax</taxon>
    </lineage>
</organism>
<gene>
    <name evidence="1" type="primary">lipA</name>
    <name type="ordered locus">Aave_0362</name>
</gene>